<evidence type="ECO:0000255" key="1">
    <source>
        <dbReference type="HAMAP-Rule" id="MF_01254"/>
    </source>
</evidence>
<dbReference type="EC" id="5.3.1.25" evidence="1"/>
<dbReference type="EMBL" id="CP001120">
    <property type="protein sequence ID" value="ACF69296.1"/>
    <property type="molecule type" value="Genomic_DNA"/>
</dbReference>
<dbReference type="RefSeq" id="WP_000724183.1">
    <property type="nucleotide sequence ID" value="NC_011083.1"/>
</dbReference>
<dbReference type="SMR" id="B4TGN3"/>
<dbReference type="KEGG" id="seh:SeHA_C3186"/>
<dbReference type="HOGENOM" id="CLU_033326_1_0_6"/>
<dbReference type="UniPathway" id="UPA00563">
    <property type="reaction ID" value="UER00624"/>
</dbReference>
<dbReference type="Proteomes" id="UP000001866">
    <property type="component" value="Chromosome"/>
</dbReference>
<dbReference type="GO" id="GO:0005737">
    <property type="term" value="C:cytoplasm"/>
    <property type="evidence" value="ECO:0007669"/>
    <property type="project" value="UniProtKB-SubCell"/>
</dbReference>
<dbReference type="GO" id="GO:0008790">
    <property type="term" value="F:arabinose isomerase activity"/>
    <property type="evidence" value="ECO:0007669"/>
    <property type="project" value="TreeGrafter"/>
</dbReference>
<dbReference type="GO" id="GO:0008736">
    <property type="term" value="F:L-fucose isomerase activity"/>
    <property type="evidence" value="ECO:0007669"/>
    <property type="project" value="UniProtKB-UniRule"/>
</dbReference>
<dbReference type="GO" id="GO:0030145">
    <property type="term" value="F:manganese ion binding"/>
    <property type="evidence" value="ECO:0007669"/>
    <property type="project" value="UniProtKB-UniRule"/>
</dbReference>
<dbReference type="GO" id="GO:0019571">
    <property type="term" value="P:D-arabinose catabolic process"/>
    <property type="evidence" value="ECO:0007669"/>
    <property type="project" value="TreeGrafter"/>
</dbReference>
<dbReference type="GO" id="GO:0042355">
    <property type="term" value="P:L-fucose catabolic process"/>
    <property type="evidence" value="ECO:0007669"/>
    <property type="project" value="UniProtKB-UniRule"/>
</dbReference>
<dbReference type="FunFam" id="3.20.14.10:FF:000001">
    <property type="entry name" value="L-fucose isomerase"/>
    <property type="match status" value="1"/>
</dbReference>
<dbReference type="FunFam" id="3.40.275.10:FF:000001">
    <property type="entry name" value="L-fucose isomerase"/>
    <property type="match status" value="1"/>
</dbReference>
<dbReference type="FunFam" id="3.40.50.1070:FF:000001">
    <property type="entry name" value="L-fucose isomerase"/>
    <property type="match status" value="1"/>
</dbReference>
<dbReference type="Gene3D" id="3.40.50.1070">
    <property type="match status" value="1"/>
</dbReference>
<dbReference type="Gene3D" id="3.40.275.10">
    <property type="entry name" value="L-fucose Isomerase, Chain A, domain 2"/>
    <property type="match status" value="1"/>
</dbReference>
<dbReference type="Gene3D" id="3.20.14.10">
    <property type="entry name" value="L-fucose/L-arabinose isomerase, C-terminal"/>
    <property type="match status" value="1"/>
</dbReference>
<dbReference type="HAMAP" id="MF_01254">
    <property type="entry name" value="Fucose_iso"/>
    <property type="match status" value="1"/>
</dbReference>
<dbReference type="InterPro" id="IPR004216">
    <property type="entry name" value="Fuc/Ara_isomerase_C"/>
</dbReference>
<dbReference type="InterPro" id="IPR038393">
    <property type="entry name" value="Fuc_iso_dom3_sf"/>
</dbReference>
<dbReference type="InterPro" id="IPR015888">
    <property type="entry name" value="Fuc_isomerase_C"/>
</dbReference>
<dbReference type="InterPro" id="IPR038391">
    <property type="entry name" value="Fucose_iso_dom1_sf"/>
</dbReference>
<dbReference type="InterPro" id="IPR012888">
    <property type="entry name" value="Fucose_iso_N1"/>
</dbReference>
<dbReference type="InterPro" id="IPR005763">
    <property type="entry name" value="Fucose_isomerase"/>
</dbReference>
<dbReference type="InterPro" id="IPR038392">
    <property type="entry name" value="Fucose_isomerase_dom2_sf"/>
</dbReference>
<dbReference type="InterPro" id="IPR009015">
    <property type="entry name" value="Fucose_isomerase_N/cen_sf"/>
</dbReference>
<dbReference type="InterPro" id="IPR012889">
    <property type="entry name" value="Fucose_isomerase_N2"/>
</dbReference>
<dbReference type="NCBIfam" id="TIGR01089">
    <property type="entry name" value="fucI"/>
    <property type="match status" value="1"/>
</dbReference>
<dbReference type="NCBIfam" id="NF008220">
    <property type="entry name" value="PRK10991.1"/>
    <property type="match status" value="1"/>
</dbReference>
<dbReference type="PANTHER" id="PTHR37840">
    <property type="entry name" value="L-FUCOSE ISOMERASE"/>
    <property type="match status" value="1"/>
</dbReference>
<dbReference type="PANTHER" id="PTHR37840:SF1">
    <property type="entry name" value="L-FUCOSE ISOMERASE"/>
    <property type="match status" value="1"/>
</dbReference>
<dbReference type="Pfam" id="PF02952">
    <property type="entry name" value="Fucose_iso_C"/>
    <property type="match status" value="1"/>
</dbReference>
<dbReference type="Pfam" id="PF07881">
    <property type="entry name" value="Fucose_iso_N1"/>
    <property type="match status" value="1"/>
</dbReference>
<dbReference type="Pfam" id="PF07882">
    <property type="entry name" value="Fucose_iso_N2"/>
    <property type="match status" value="1"/>
</dbReference>
<dbReference type="SUPFAM" id="SSF50443">
    <property type="entry name" value="FucI/AraA C-terminal domain-like"/>
    <property type="match status" value="1"/>
</dbReference>
<dbReference type="SUPFAM" id="SSF53743">
    <property type="entry name" value="FucI/AraA N-terminal and middle domains"/>
    <property type="match status" value="1"/>
</dbReference>
<protein>
    <recommendedName>
        <fullName evidence="1">L-fucose isomerase</fullName>
        <ecNumber evidence="1">5.3.1.25</ecNumber>
    </recommendedName>
    <alternativeName>
        <fullName evidence="1">6-deoxy-L-galactose isomerase</fullName>
    </alternativeName>
    <alternativeName>
        <fullName>FucIase</fullName>
    </alternativeName>
</protein>
<keyword id="KW-0119">Carbohydrate metabolism</keyword>
<keyword id="KW-0963">Cytoplasm</keyword>
<keyword id="KW-0294">Fucose metabolism</keyword>
<keyword id="KW-0413">Isomerase</keyword>
<keyword id="KW-0464">Manganese</keyword>
<keyword id="KW-0479">Metal-binding</keyword>
<accession>B4TGN3</accession>
<gene>
    <name evidence="1" type="primary">fucI</name>
    <name type="ordered locus">SeHA_C3186</name>
</gene>
<comment type="function">
    <text evidence="1">Converts the aldose L-fucose into the corresponding ketose L-fuculose.</text>
</comment>
<comment type="catalytic activity">
    <reaction evidence="1">
        <text>L-fucose = L-fuculose</text>
        <dbReference type="Rhea" id="RHEA:17233"/>
        <dbReference type="ChEBI" id="CHEBI:2181"/>
        <dbReference type="ChEBI" id="CHEBI:17617"/>
        <dbReference type="EC" id="5.3.1.25"/>
    </reaction>
</comment>
<comment type="cofactor">
    <cofactor evidence="1">
        <name>Mn(2+)</name>
        <dbReference type="ChEBI" id="CHEBI:29035"/>
    </cofactor>
</comment>
<comment type="pathway">
    <text evidence="1">Carbohydrate degradation; L-fucose degradation; L-lactaldehyde and glycerone phosphate from L-fucose: step 1/3.</text>
</comment>
<comment type="subunit">
    <text evidence="1">Homohexamer.</text>
</comment>
<comment type="subcellular location">
    <subcellularLocation>
        <location evidence="1">Cytoplasm</location>
    </subcellularLocation>
</comment>
<comment type="similarity">
    <text evidence="1">Belongs to the L-fucose isomerase family.</text>
</comment>
<proteinExistence type="inferred from homology"/>
<reference key="1">
    <citation type="journal article" date="2011" name="J. Bacteriol.">
        <title>Comparative genomics of 28 Salmonella enterica isolates: evidence for CRISPR-mediated adaptive sublineage evolution.</title>
        <authorList>
            <person name="Fricke W.F."/>
            <person name="Mammel M.K."/>
            <person name="McDermott P.F."/>
            <person name="Tartera C."/>
            <person name="White D.G."/>
            <person name="Leclerc J.E."/>
            <person name="Ravel J."/>
            <person name="Cebula T.A."/>
        </authorList>
    </citation>
    <scope>NUCLEOTIDE SEQUENCE [LARGE SCALE GENOMIC DNA]</scope>
    <source>
        <strain>SL476</strain>
    </source>
</reference>
<organism>
    <name type="scientific">Salmonella heidelberg (strain SL476)</name>
    <dbReference type="NCBI Taxonomy" id="454169"/>
    <lineage>
        <taxon>Bacteria</taxon>
        <taxon>Pseudomonadati</taxon>
        <taxon>Pseudomonadota</taxon>
        <taxon>Gammaproteobacteria</taxon>
        <taxon>Enterobacterales</taxon>
        <taxon>Enterobacteriaceae</taxon>
        <taxon>Salmonella</taxon>
    </lineage>
</organism>
<name>FUCI_SALHS</name>
<sequence>MKKISLPKIGIRPVIDGRRMGVRESLEEQTMNMAKATAVLITEKIRHACGAQVECVIADTCIAGMAESAACEEKFSSQNVGVTITVTPCWCYGSETIDMDPMRPKAIWGFNGTERPGAVYLAAALAAHSQKGIPAFSIYGHDVQDADDTSIPADVEEKLLRFARAGLAVASMKGKSYLSVGGVSMGIAGSIVDHNFFESWLGMKVQAVDMTELRRRIDQKIYDEAELEMALAWADKNFRYGEDQNASQYKRNEAQNRAVLKESLLMAMCIRDMMQGNKTLAGKGLVEESLGYNAIAAGFQGQRHWTDQYPNGDTAEALLNSSFDWNGVREPFVVATENDSLNGVAMLFGHQLTGTAQIFADVRTYWSPEAVERVTGQALSGLAEHGIIHLINSGSAALDGACKQRDSEGKPTMKPHWEISQQEADACLAATEWCPAIHEYFRGGGYSSRFLTEGGVPFTMTRVNIIKGLGPVLQIAEGWSVELPKAMHDQLDARTNSTWPTTWFAPRLTGKGPFTDVYSVMANWGANHGVLTIGHVGADFITLAAMLRIPVCMHNVEEAKIYRPSAWAAHGMDIEGQDYRACQNYGPLYKR</sequence>
<feature type="chain" id="PRO_1000139961" description="L-fucose isomerase">
    <location>
        <begin position="1"/>
        <end position="591"/>
    </location>
</feature>
<feature type="active site" description="Proton acceptor" evidence="1">
    <location>
        <position position="337"/>
    </location>
</feature>
<feature type="active site" description="Proton acceptor" evidence="1">
    <location>
        <position position="361"/>
    </location>
</feature>
<feature type="binding site" evidence="1">
    <location>
        <position position="337"/>
    </location>
    <ligand>
        <name>Mn(2+)</name>
        <dbReference type="ChEBI" id="CHEBI:29035"/>
    </ligand>
</feature>
<feature type="binding site" evidence="1">
    <location>
        <position position="361"/>
    </location>
    <ligand>
        <name>Mn(2+)</name>
        <dbReference type="ChEBI" id="CHEBI:29035"/>
    </ligand>
</feature>
<feature type="binding site" evidence="1">
    <location>
        <position position="528"/>
    </location>
    <ligand>
        <name>Mn(2+)</name>
        <dbReference type="ChEBI" id="CHEBI:29035"/>
    </ligand>
</feature>